<name>YQGF_ROSS1</name>
<organism>
    <name type="scientific">Roseiflexus sp. (strain RS-1)</name>
    <dbReference type="NCBI Taxonomy" id="357808"/>
    <lineage>
        <taxon>Bacteria</taxon>
        <taxon>Bacillati</taxon>
        <taxon>Chloroflexota</taxon>
        <taxon>Chloroflexia</taxon>
        <taxon>Chloroflexales</taxon>
        <taxon>Roseiflexineae</taxon>
        <taxon>Roseiflexaceae</taxon>
        <taxon>Roseiflexus</taxon>
    </lineage>
</organism>
<reference key="1">
    <citation type="submission" date="2007-04" db="EMBL/GenBank/DDBJ databases">
        <title>Complete sequence of Roseiflexus sp. RS-1.</title>
        <authorList>
            <consortium name="US DOE Joint Genome Institute"/>
            <person name="Copeland A."/>
            <person name="Lucas S."/>
            <person name="Lapidus A."/>
            <person name="Barry K."/>
            <person name="Detter J.C."/>
            <person name="Glavina del Rio T."/>
            <person name="Hammon N."/>
            <person name="Israni S."/>
            <person name="Dalin E."/>
            <person name="Tice H."/>
            <person name="Pitluck S."/>
            <person name="Chertkov O."/>
            <person name="Brettin T."/>
            <person name="Bruce D."/>
            <person name="Han C."/>
            <person name="Schmutz J."/>
            <person name="Larimer F."/>
            <person name="Land M."/>
            <person name="Hauser L."/>
            <person name="Kyrpides N."/>
            <person name="Mikhailova N."/>
            <person name="Bryant D.A."/>
            <person name="Richardson P."/>
        </authorList>
    </citation>
    <scope>NUCLEOTIDE SEQUENCE [LARGE SCALE GENOMIC DNA]</scope>
    <source>
        <strain>RS-1</strain>
    </source>
</reference>
<feature type="chain" id="PRO_1000131065" description="Putative pre-16S rRNA nuclease">
    <location>
        <begin position="1"/>
        <end position="141"/>
    </location>
</feature>
<proteinExistence type="inferred from homology"/>
<evidence type="ECO:0000255" key="1">
    <source>
        <dbReference type="HAMAP-Rule" id="MF_00651"/>
    </source>
</evidence>
<keyword id="KW-0963">Cytoplasm</keyword>
<keyword id="KW-0378">Hydrolase</keyword>
<keyword id="KW-0540">Nuclease</keyword>
<keyword id="KW-0690">Ribosome biogenesis</keyword>
<gene>
    <name type="ordered locus">RoseRS_3225</name>
</gene>
<comment type="function">
    <text evidence="1">Could be a nuclease involved in processing of the 5'-end of pre-16S rRNA.</text>
</comment>
<comment type="subcellular location">
    <subcellularLocation>
        <location evidence="1">Cytoplasm</location>
    </subcellularLocation>
</comment>
<comment type="similarity">
    <text evidence="1">Belongs to the YqgF nuclease family.</text>
</comment>
<accession>A5UY83</accession>
<dbReference type="EC" id="3.1.-.-" evidence="1"/>
<dbReference type="EMBL" id="CP000686">
    <property type="protein sequence ID" value="ABQ91586.1"/>
    <property type="molecule type" value="Genomic_DNA"/>
</dbReference>
<dbReference type="SMR" id="A5UY83"/>
<dbReference type="STRING" id="357808.RoseRS_3225"/>
<dbReference type="KEGG" id="rrs:RoseRS_3225"/>
<dbReference type="eggNOG" id="COG0816">
    <property type="taxonomic scope" value="Bacteria"/>
</dbReference>
<dbReference type="HOGENOM" id="CLU_098240_2_0_0"/>
<dbReference type="OrthoDB" id="9796140at2"/>
<dbReference type="Proteomes" id="UP000006554">
    <property type="component" value="Chromosome"/>
</dbReference>
<dbReference type="GO" id="GO:0005829">
    <property type="term" value="C:cytosol"/>
    <property type="evidence" value="ECO:0007669"/>
    <property type="project" value="TreeGrafter"/>
</dbReference>
<dbReference type="GO" id="GO:0004518">
    <property type="term" value="F:nuclease activity"/>
    <property type="evidence" value="ECO:0007669"/>
    <property type="project" value="UniProtKB-KW"/>
</dbReference>
<dbReference type="GO" id="GO:0000967">
    <property type="term" value="P:rRNA 5'-end processing"/>
    <property type="evidence" value="ECO:0007669"/>
    <property type="project" value="UniProtKB-UniRule"/>
</dbReference>
<dbReference type="CDD" id="cd16964">
    <property type="entry name" value="YqgF"/>
    <property type="match status" value="1"/>
</dbReference>
<dbReference type="Gene3D" id="3.30.420.140">
    <property type="entry name" value="YqgF/RNase H-like domain"/>
    <property type="match status" value="1"/>
</dbReference>
<dbReference type="HAMAP" id="MF_00651">
    <property type="entry name" value="Nuclease_YqgF"/>
    <property type="match status" value="1"/>
</dbReference>
<dbReference type="InterPro" id="IPR012337">
    <property type="entry name" value="RNaseH-like_sf"/>
</dbReference>
<dbReference type="InterPro" id="IPR005227">
    <property type="entry name" value="YqgF"/>
</dbReference>
<dbReference type="InterPro" id="IPR006641">
    <property type="entry name" value="YqgF/RNaseH-like_dom"/>
</dbReference>
<dbReference type="InterPro" id="IPR037027">
    <property type="entry name" value="YqgF/RNaseH-like_dom_sf"/>
</dbReference>
<dbReference type="NCBIfam" id="TIGR00250">
    <property type="entry name" value="RNAse_H_YqgF"/>
    <property type="match status" value="1"/>
</dbReference>
<dbReference type="PANTHER" id="PTHR33317">
    <property type="entry name" value="POLYNUCLEOTIDYL TRANSFERASE, RIBONUCLEASE H-LIKE SUPERFAMILY PROTEIN"/>
    <property type="match status" value="1"/>
</dbReference>
<dbReference type="PANTHER" id="PTHR33317:SF4">
    <property type="entry name" value="POLYNUCLEOTIDYL TRANSFERASE, RIBONUCLEASE H-LIKE SUPERFAMILY PROTEIN"/>
    <property type="match status" value="1"/>
</dbReference>
<dbReference type="Pfam" id="PF03652">
    <property type="entry name" value="RuvX"/>
    <property type="match status" value="1"/>
</dbReference>
<dbReference type="SMART" id="SM00732">
    <property type="entry name" value="YqgFc"/>
    <property type="match status" value="1"/>
</dbReference>
<dbReference type="SUPFAM" id="SSF53098">
    <property type="entry name" value="Ribonuclease H-like"/>
    <property type="match status" value="1"/>
</dbReference>
<protein>
    <recommendedName>
        <fullName evidence="1">Putative pre-16S rRNA nuclease</fullName>
        <ecNumber evidence="1">3.1.-.-</ecNumber>
    </recommendedName>
</protein>
<sequence>MSSEPGRVMALDVGERRIGVALSDPTRMLASPLTTIRAVPRSTALKRILTLIRDYQVTALVVGLPLTMNGDIGPQATLVQQFVDELRPLIDIPIFFVDERLTTVAAERMMIDLKIKPEQRRARIDEVAASIILQDFLDSQR</sequence>